<keyword id="KW-1003">Cell membrane</keyword>
<keyword id="KW-0406">Ion transport</keyword>
<keyword id="KW-0472">Membrane</keyword>
<keyword id="KW-1185">Reference proteome</keyword>
<keyword id="KW-0732">Signal</keyword>
<keyword id="KW-0812">Transmembrane</keyword>
<keyword id="KW-1133">Transmembrane helix</keyword>
<keyword id="KW-0813">Transport</keyword>
<keyword id="KW-0862">Zinc</keyword>
<keyword id="KW-0864">Zinc transport</keyword>
<proteinExistence type="evidence at transcript level"/>
<protein>
    <recommendedName>
        <fullName>Zinc transporter 7</fullName>
    </recommendedName>
    <alternativeName>
        <fullName>ZRT/IRT-like protein 7</fullName>
        <shortName>OsZIP7</shortName>
    </alternativeName>
</protein>
<accession>Q6L8F7</accession>
<accession>A0A0P0WJ17</accession>
<accession>Q84L19</accession>
<gene>
    <name type="primary">ZIP7</name>
    <name type="synonym">ZIP3</name>
    <name type="synonym">ZIP7a</name>
    <name type="ordered locus">Os05g0198400</name>
    <name type="ordered locus">LOC_Os05g10940</name>
    <name type="ORF">OsJ_17459</name>
    <name type="ORF">OSJNBa0007C23.6</name>
</gene>
<feature type="signal peptide" evidence="2">
    <location>
        <begin position="1"/>
        <end position="25"/>
    </location>
</feature>
<feature type="chain" id="PRO_0000398331" description="Zinc transporter 7">
    <location>
        <begin position="26"/>
        <end position="384"/>
    </location>
</feature>
<feature type="topological domain" description="Extracellular" evidence="2">
    <location>
        <begin position="26"/>
        <end position="46"/>
    </location>
</feature>
<feature type="transmembrane region" description="Helical" evidence="2">
    <location>
        <begin position="47"/>
        <end position="67"/>
    </location>
</feature>
<feature type="topological domain" description="Cytoplasmic" evidence="2">
    <location>
        <begin position="68"/>
        <end position="79"/>
    </location>
</feature>
<feature type="transmembrane region" description="Helical" evidence="2">
    <location>
        <begin position="80"/>
        <end position="100"/>
    </location>
</feature>
<feature type="topological domain" description="Extracellular" evidence="2">
    <location>
        <begin position="101"/>
        <end position="119"/>
    </location>
</feature>
<feature type="transmembrane region" description="Helical" evidence="2">
    <location>
        <begin position="120"/>
        <end position="140"/>
    </location>
</feature>
<feature type="topological domain" description="Cytoplasmic" evidence="2">
    <location>
        <begin position="141"/>
        <end position="227"/>
    </location>
</feature>
<feature type="transmembrane region" description="Helical" evidence="2">
    <location>
        <begin position="228"/>
        <end position="248"/>
    </location>
</feature>
<feature type="topological domain" description="Extracellular" evidence="2">
    <location>
        <begin position="249"/>
        <end position="261"/>
    </location>
</feature>
<feature type="transmembrane region" description="Helical" evidence="2">
    <location>
        <begin position="262"/>
        <end position="282"/>
    </location>
</feature>
<feature type="topological domain" description="Cytoplasmic" evidence="2">
    <location>
        <begin position="283"/>
        <end position="291"/>
    </location>
</feature>
<feature type="transmembrane region" description="Helical" evidence="2">
    <location>
        <begin position="292"/>
        <end position="312"/>
    </location>
</feature>
<feature type="topological domain" description="Extracellular" evidence="2">
    <location>
        <begin position="313"/>
        <end position="323"/>
    </location>
</feature>
<feature type="transmembrane region" description="Helical" evidence="2">
    <location>
        <begin position="324"/>
        <end position="344"/>
    </location>
</feature>
<feature type="topological domain" description="Cytoplasmic" evidence="2">
    <location>
        <begin position="345"/>
        <end position="363"/>
    </location>
</feature>
<feature type="transmembrane region" description="Helical" evidence="2">
    <location>
        <begin position="364"/>
        <end position="384"/>
    </location>
</feature>
<feature type="region of interest" description="Disordered" evidence="3">
    <location>
        <begin position="185"/>
        <end position="222"/>
    </location>
</feature>
<feature type="compositionally biased region" description="Basic residues" evidence="3">
    <location>
        <begin position="195"/>
        <end position="205"/>
    </location>
</feature>
<feature type="sequence conflict" description="In Ref. 1; AAP31902." evidence="5" ref="1">
    <original>V</original>
    <variation>A</variation>
    <location>
        <position position="28"/>
    </location>
</feature>
<feature type="sequence conflict" description="In Ref. 1; AAP31902." evidence="5" ref="1">
    <original>K</original>
    <variation>N</variation>
    <location>
        <position position="148"/>
    </location>
</feature>
<feature type="sequence conflict" description="In Ref. 1; AAP31902." evidence="5" ref="1">
    <original>A</original>
    <variation>P</variation>
    <location>
        <position position="318"/>
    </location>
</feature>
<feature type="sequence conflict" description="In Ref. 1; AAP31902." evidence="5" ref="1">
    <original>L</original>
    <variation>Q</variation>
    <location>
        <position position="343"/>
    </location>
</feature>
<evidence type="ECO:0000250" key="1"/>
<evidence type="ECO:0000255" key="2"/>
<evidence type="ECO:0000256" key="3">
    <source>
        <dbReference type="SAM" id="MobiDB-lite"/>
    </source>
</evidence>
<evidence type="ECO:0000269" key="4">
    <source>
    </source>
</evidence>
<evidence type="ECO:0000305" key="5"/>
<comment type="function">
    <text evidence="1">Zinc transporter that may be involved in zinc uptake from the rhizosphere.</text>
</comment>
<comment type="subcellular location">
    <subcellularLocation>
        <location evidence="5">Cell membrane</location>
        <topology evidence="5">Multi-pass membrane protein</topology>
    </subcellularLocation>
</comment>
<comment type="induction">
    <text evidence="4">By iron deficiency in roots.</text>
</comment>
<comment type="similarity">
    <text evidence="5">Belongs to the ZIP transporter (TC 2.A.5) family.</text>
</comment>
<dbReference type="EMBL" id="AY275180">
    <property type="protein sequence ID" value="AAP31902.1"/>
    <property type="molecule type" value="mRNA"/>
</dbReference>
<dbReference type="EMBL" id="AB126090">
    <property type="protein sequence ID" value="BAD18968.1"/>
    <property type="molecule type" value="mRNA"/>
</dbReference>
<dbReference type="EMBL" id="AC136519">
    <property type="protein sequence ID" value="AAV24912.1"/>
    <property type="molecule type" value="Genomic_DNA"/>
</dbReference>
<dbReference type="EMBL" id="AP008211">
    <property type="protein sequence ID" value="BAF16789.1"/>
    <property type="molecule type" value="Genomic_DNA"/>
</dbReference>
<dbReference type="EMBL" id="AP014961">
    <property type="protein sequence ID" value="BAS92696.1"/>
    <property type="molecule type" value="Genomic_DNA"/>
</dbReference>
<dbReference type="EMBL" id="CM000142">
    <property type="protein sequence ID" value="EEE62656.1"/>
    <property type="molecule type" value="Genomic_DNA"/>
</dbReference>
<dbReference type="EMBL" id="AK071272">
    <property type="protein sequence ID" value="BAG92405.1"/>
    <property type="molecule type" value="mRNA"/>
</dbReference>
<dbReference type="RefSeq" id="XP_015637712.1">
    <property type="nucleotide sequence ID" value="XM_015782226.1"/>
</dbReference>
<dbReference type="SMR" id="Q6L8F7"/>
<dbReference type="FunCoup" id="Q6L8F7">
    <property type="interactions" value="1801"/>
</dbReference>
<dbReference type="STRING" id="39947.Q6L8F7"/>
<dbReference type="PaxDb" id="39947-Q6L8F7"/>
<dbReference type="EnsemblPlants" id="Os05t0198400-01">
    <property type="protein sequence ID" value="Os05t0198400-01"/>
    <property type="gene ID" value="Os05g0198400"/>
</dbReference>
<dbReference type="Gramene" id="Os05t0198400-01">
    <property type="protein sequence ID" value="Os05t0198400-01"/>
    <property type="gene ID" value="Os05g0198400"/>
</dbReference>
<dbReference type="KEGG" id="dosa:Os05g0198400"/>
<dbReference type="eggNOG" id="KOG1558">
    <property type="taxonomic scope" value="Eukaryota"/>
</dbReference>
<dbReference type="HOGENOM" id="CLU_027089_3_0_1"/>
<dbReference type="InParanoid" id="Q6L8F7"/>
<dbReference type="OMA" id="IFFACKH"/>
<dbReference type="OrthoDB" id="448280at2759"/>
<dbReference type="Proteomes" id="UP000000763">
    <property type="component" value="Chromosome 5"/>
</dbReference>
<dbReference type="Proteomes" id="UP000007752">
    <property type="component" value="Chromosome 5"/>
</dbReference>
<dbReference type="Proteomes" id="UP000059680">
    <property type="component" value="Chromosome 5"/>
</dbReference>
<dbReference type="GO" id="GO:0005886">
    <property type="term" value="C:plasma membrane"/>
    <property type="evidence" value="ECO:0000318"/>
    <property type="project" value="GO_Central"/>
</dbReference>
<dbReference type="GO" id="GO:0005385">
    <property type="term" value="F:zinc ion transmembrane transporter activity"/>
    <property type="evidence" value="ECO:0000318"/>
    <property type="project" value="GO_Central"/>
</dbReference>
<dbReference type="GO" id="GO:0071577">
    <property type="term" value="P:zinc ion transmembrane transport"/>
    <property type="evidence" value="ECO:0000318"/>
    <property type="project" value="GO_Central"/>
</dbReference>
<dbReference type="InterPro" id="IPR003689">
    <property type="entry name" value="ZIP"/>
</dbReference>
<dbReference type="InterPro" id="IPR004698">
    <property type="entry name" value="Zn/Fe_permease_fun/pln"/>
</dbReference>
<dbReference type="NCBIfam" id="TIGR00820">
    <property type="entry name" value="zip"/>
    <property type="match status" value="1"/>
</dbReference>
<dbReference type="PANTHER" id="PTHR11040:SF44">
    <property type="entry name" value="PROTEIN ZNTC-RELATED"/>
    <property type="match status" value="1"/>
</dbReference>
<dbReference type="PANTHER" id="PTHR11040">
    <property type="entry name" value="ZINC/IRON TRANSPORTER"/>
    <property type="match status" value="1"/>
</dbReference>
<dbReference type="Pfam" id="PF02535">
    <property type="entry name" value="Zip"/>
    <property type="match status" value="1"/>
</dbReference>
<name>ZIP7_ORYSJ</name>
<organism>
    <name type="scientific">Oryza sativa subsp. japonica</name>
    <name type="common">Rice</name>
    <dbReference type="NCBI Taxonomy" id="39947"/>
    <lineage>
        <taxon>Eukaryota</taxon>
        <taxon>Viridiplantae</taxon>
        <taxon>Streptophyta</taxon>
        <taxon>Embryophyta</taxon>
        <taxon>Tracheophyta</taxon>
        <taxon>Spermatophyta</taxon>
        <taxon>Magnoliopsida</taxon>
        <taxon>Liliopsida</taxon>
        <taxon>Poales</taxon>
        <taxon>Poaceae</taxon>
        <taxon>BOP clade</taxon>
        <taxon>Oryzoideae</taxon>
        <taxon>Oryzeae</taxon>
        <taxon>Oryzinae</taxon>
        <taxon>Oryza</taxon>
        <taxon>Oryza sativa</taxon>
    </lineage>
</organism>
<sequence length="384" mass="39728">MERFVQFLRRGNGLMAASLAAGSCAEEVAKAEGAGCRDDAAALRLKGVAMATILVAGVVGVGLPLAGRKRRALRTDSAAFVAAKAFAAGVILATGFVHMLHDAEHALSSPCLPAHPWRSFPFPGFVAMSAALATLVLDFLATRFYEGKHRAETERVKAAAAAALAASSASDDDITVVTVTEDDNDNKAPLLQPHSHSHSHPHGHGHGHELAQPEGSGGEGEVPAQVRSVVVSQILEMGIVSHSVIIGLSLGVSRSPCTIRPLVAALSFHQFFEGFALGGCIAQAQFKTLSAAIMACFFAITTPAGIAAGAGVASFYNANSPRALVVEGILDSVSAGILIYMSLVDLIAADFLGGKMTGSTRQQVMAYIALFLGALSMSSLAIWA</sequence>
<reference key="1">
    <citation type="submission" date="2003-04" db="EMBL/GenBank/DDBJ databases">
        <title>Molecular cloning and characterization of a ZIP-like zinc transporter cDNA from rice (Oryza sativa L.).</title>
        <authorList>
            <person name="Huang J."/>
            <person name="Zhang H."/>
            <person name="Hou F."/>
        </authorList>
    </citation>
    <scope>NUCLEOTIDE SEQUENCE [MRNA]</scope>
    <source>
        <strain>cv. Jiu Caiqing</strain>
        <tissue>Spike</tissue>
    </source>
</reference>
<reference key="2">
    <citation type="journal article" date="2005" name="J. Exp. Bot.">
        <title>OsZIP4, a novel zinc-regulated zinc transporter in rice.</title>
        <authorList>
            <person name="Ishimaru Y."/>
            <person name="Suzuki M."/>
            <person name="Kobayashi T."/>
            <person name="Takahashi M."/>
            <person name="Nakanishi H."/>
            <person name="Mori S."/>
            <person name="Nishizawa N.K."/>
        </authorList>
    </citation>
    <scope>NUCLEOTIDE SEQUENCE [MRNA]</scope>
</reference>
<reference key="3">
    <citation type="journal article" date="2005" name="Mol. Genet. Genomics">
        <title>A fine physical map of the rice chromosome 5.</title>
        <authorList>
            <person name="Cheng C.-H."/>
            <person name="Chung M.C."/>
            <person name="Liu S.-M."/>
            <person name="Chen S.-K."/>
            <person name="Kao F.Y."/>
            <person name="Lin S.-J."/>
            <person name="Hsiao S.-H."/>
            <person name="Tseng I.C."/>
            <person name="Hsing Y.-I.C."/>
            <person name="Wu H.-P."/>
            <person name="Chen C.-S."/>
            <person name="Shaw J.-F."/>
            <person name="Wu J."/>
            <person name="Matsumoto T."/>
            <person name="Sasaki T."/>
            <person name="Chen H.-C."/>
            <person name="Chow T.-Y."/>
        </authorList>
    </citation>
    <scope>NUCLEOTIDE SEQUENCE [LARGE SCALE GENOMIC DNA]</scope>
    <source>
        <strain>cv. Nipponbare</strain>
    </source>
</reference>
<reference key="4">
    <citation type="journal article" date="2005" name="Nature">
        <title>The map-based sequence of the rice genome.</title>
        <authorList>
            <consortium name="International rice genome sequencing project (IRGSP)"/>
        </authorList>
    </citation>
    <scope>NUCLEOTIDE SEQUENCE [LARGE SCALE GENOMIC DNA]</scope>
    <source>
        <strain>cv. Nipponbare</strain>
    </source>
</reference>
<reference key="5">
    <citation type="journal article" date="2008" name="Nucleic Acids Res.">
        <title>The rice annotation project database (RAP-DB): 2008 update.</title>
        <authorList>
            <consortium name="The rice annotation project (RAP)"/>
        </authorList>
    </citation>
    <scope>GENOME REANNOTATION</scope>
    <source>
        <strain>cv. Nipponbare</strain>
    </source>
</reference>
<reference key="6">
    <citation type="journal article" date="2013" name="Rice">
        <title>Improvement of the Oryza sativa Nipponbare reference genome using next generation sequence and optical map data.</title>
        <authorList>
            <person name="Kawahara Y."/>
            <person name="de la Bastide M."/>
            <person name="Hamilton J.P."/>
            <person name="Kanamori H."/>
            <person name="McCombie W.R."/>
            <person name="Ouyang S."/>
            <person name="Schwartz D.C."/>
            <person name="Tanaka T."/>
            <person name="Wu J."/>
            <person name="Zhou S."/>
            <person name="Childs K.L."/>
            <person name="Davidson R.M."/>
            <person name="Lin H."/>
            <person name="Quesada-Ocampo L."/>
            <person name="Vaillancourt B."/>
            <person name="Sakai H."/>
            <person name="Lee S.S."/>
            <person name="Kim J."/>
            <person name="Numa H."/>
            <person name="Itoh T."/>
            <person name="Buell C.R."/>
            <person name="Matsumoto T."/>
        </authorList>
    </citation>
    <scope>GENOME REANNOTATION</scope>
    <source>
        <strain>cv. Nipponbare</strain>
    </source>
</reference>
<reference key="7">
    <citation type="journal article" date="2005" name="PLoS Biol.">
        <title>The genomes of Oryza sativa: a history of duplications.</title>
        <authorList>
            <person name="Yu J."/>
            <person name="Wang J."/>
            <person name="Lin W."/>
            <person name="Li S."/>
            <person name="Li H."/>
            <person name="Zhou J."/>
            <person name="Ni P."/>
            <person name="Dong W."/>
            <person name="Hu S."/>
            <person name="Zeng C."/>
            <person name="Zhang J."/>
            <person name="Zhang Y."/>
            <person name="Li R."/>
            <person name="Xu Z."/>
            <person name="Li S."/>
            <person name="Li X."/>
            <person name="Zheng H."/>
            <person name="Cong L."/>
            <person name="Lin L."/>
            <person name="Yin J."/>
            <person name="Geng J."/>
            <person name="Li G."/>
            <person name="Shi J."/>
            <person name="Liu J."/>
            <person name="Lv H."/>
            <person name="Li J."/>
            <person name="Wang J."/>
            <person name="Deng Y."/>
            <person name="Ran L."/>
            <person name="Shi X."/>
            <person name="Wang X."/>
            <person name="Wu Q."/>
            <person name="Li C."/>
            <person name="Ren X."/>
            <person name="Wang J."/>
            <person name="Wang X."/>
            <person name="Li D."/>
            <person name="Liu D."/>
            <person name="Zhang X."/>
            <person name="Ji Z."/>
            <person name="Zhao W."/>
            <person name="Sun Y."/>
            <person name="Zhang Z."/>
            <person name="Bao J."/>
            <person name="Han Y."/>
            <person name="Dong L."/>
            <person name="Ji J."/>
            <person name="Chen P."/>
            <person name="Wu S."/>
            <person name="Liu J."/>
            <person name="Xiao Y."/>
            <person name="Bu D."/>
            <person name="Tan J."/>
            <person name="Yang L."/>
            <person name="Ye C."/>
            <person name="Zhang J."/>
            <person name="Xu J."/>
            <person name="Zhou Y."/>
            <person name="Yu Y."/>
            <person name="Zhang B."/>
            <person name="Zhuang S."/>
            <person name="Wei H."/>
            <person name="Liu B."/>
            <person name="Lei M."/>
            <person name="Yu H."/>
            <person name="Li Y."/>
            <person name="Xu H."/>
            <person name="Wei S."/>
            <person name="He X."/>
            <person name="Fang L."/>
            <person name="Zhang Z."/>
            <person name="Zhang Y."/>
            <person name="Huang X."/>
            <person name="Su Z."/>
            <person name="Tong W."/>
            <person name="Li J."/>
            <person name="Tong Z."/>
            <person name="Li S."/>
            <person name="Ye J."/>
            <person name="Wang L."/>
            <person name="Fang L."/>
            <person name="Lei T."/>
            <person name="Chen C.-S."/>
            <person name="Chen H.-C."/>
            <person name="Xu Z."/>
            <person name="Li H."/>
            <person name="Huang H."/>
            <person name="Zhang F."/>
            <person name="Xu H."/>
            <person name="Li N."/>
            <person name="Zhao C."/>
            <person name="Li S."/>
            <person name="Dong L."/>
            <person name="Huang Y."/>
            <person name="Li L."/>
            <person name="Xi Y."/>
            <person name="Qi Q."/>
            <person name="Li W."/>
            <person name="Zhang B."/>
            <person name="Hu W."/>
            <person name="Zhang Y."/>
            <person name="Tian X."/>
            <person name="Jiao Y."/>
            <person name="Liang X."/>
            <person name="Jin J."/>
            <person name="Gao L."/>
            <person name="Zheng W."/>
            <person name="Hao B."/>
            <person name="Liu S.-M."/>
            <person name="Wang W."/>
            <person name="Yuan L."/>
            <person name="Cao M."/>
            <person name="McDermott J."/>
            <person name="Samudrala R."/>
            <person name="Wang J."/>
            <person name="Wong G.K.-S."/>
            <person name="Yang H."/>
        </authorList>
    </citation>
    <scope>NUCLEOTIDE SEQUENCE [LARGE SCALE GENOMIC DNA]</scope>
    <source>
        <strain>cv. Nipponbare</strain>
    </source>
</reference>
<reference key="8">
    <citation type="journal article" date="2003" name="Science">
        <title>Collection, mapping, and annotation of over 28,000 cDNA clones from japonica rice.</title>
        <authorList>
            <consortium name="The rice full-length cDNA consortium"/>
        </authorList>
    </citation>
    <scope>NUCLEOTIDE SEQUENCE [LARGE SCALE MRNA]</scope>
    <source>
        <strain>cv. Nipponbare</strain>
    </source>
</reference>
<reference key="9">
    <citation type="journal article" date="2009" name="Mol. Biol. Rep.">
        <title>Cloning and functional identification of two members of the ZIP (Zrt, Irt-like protein) gene family in rice (Oryza sativa L.).</title>
        <authorList>
            <person name="Yang X."/>
            <person name="Huang J."/>
            <person name="Jiang Y."/>
            <person name="Zhang H.S."/>
        </authorList>
    </citation>
    <scope>INDUCTION</scope>
</reference>